<sequence length="152" mass="17284">MSEQLNTMDIKEIMSFLPHRYPFLLIDRVLDYTPGETLHAIKNVTINEPFFQGHFPVQPVMPGVLILEAMAQATGLLAYKTMKEASEDSLYYFAGIDKARFKRVVEPGDQLHFEVKMIKERRGIGVFTGEVKVDGELVCSAEIMCARREISK</sequence>
<organism>
    <name type="scientific">Shewanella woodyi (strain ATCC 51908 / MS32)</name>
    <dbReference type="NCBI Taxonomy" id="392500"/>
    <lineage>
        <taxon>Bacteria</taxon>
        <taxon>Pseudomonadati</taxon>
        <taxon>Pseudomonadota</taxon>
        <taxon>Gammaproteobacteria</taxon>
        <taxon>Alteromonadales</taxon>
        <taxon>Shewanellaceae</taxon>
        <taxon>Shewanella</taxon>
    </lineage>
</organism>
<name>FABZ_SHEWM</name>
<gene>
    <name evidence="1" type="primary">fabZ</name>
    <name type="ordered locus">Swoo_3270</name>
</gene>
<reference key="1">
    <citation type="submission" date="2008-02" db="EMBL/GenBank/DDBJ databases">
        <title>Complete sequence of Shewanella woodyi ATCC 51908.</title>
        <authorList>
            <consortium name="US DOE Joint Genome Institute"/>
            <person name="Copeland A."/>
            <person name="Lucas S."/>
            <person name="Lapidus A."/>
            <person name="Glavina del Rio T."/>
            <person name="Dalin E."/>
            <person name="Tice H."/>
            <person name="Bruce D."/>
            <person name="Goodwin L."/>
            <person name="Pitluck S."/>
            <person name="Sims D."/>
            <person name="Brettin T."/>
            <person name="Detter J.C."/>
            <person name="Han C."/>
            <person name="Kuske C.R."/>
            <person name="Schmutz J."/>
            <person name="Larimer F."/>
            <person name="Land M."/>
            <person name="Hauser L."/>
            <person name="Kyrpides N."/>
            <person name="Lykidis A."/>
            <person name="Zhao J.-S."/>
            <person name="Richardson P."/>
        </authorList>
    </citation>
    <scope>NUCLEOTIDE SEQUENCE [LARGE SCALE GENOMIC DNA]</scope>
    <source>
        <strain>ATCC 51908 / MS32</strain>
    </source>
</reference>
<comment type="function">
    <text evidence="1">Involved in unsaturated fatty acids biosynthesis. Catalyzes the dehydration of short chain beta-hydroxyacyl-ACPs and long chain saturated and unsaturated beta-hydroxyacyl-ACPs.</text>
</comment>
<comment type="catalytic activity">
    <reaction evidence="1">
        <text>a (3R)-hydroxyacyl-[ACP] = a (2E)-enoyl-[ACP] + H2O</text>
        <dbReference type="Rhea" id="RHEA:13097"/>
        <dbReference type="Rhea" id="RHEA-COMP:9925"/>
        <dbReference type="Rhea" id="RHEA-COMP:9945"/>
        <dbReference type="ChEBI" id="CHEBI:15377"/>
        <dbReference type="ChEBI" id="CHEBI:78784"/>
        <dbReference type="ChEBI" id="CHEBI:78827"/>
        <dbReference type="EC" id="4.2.1.59"/>
    </reaction>
</comment>
<comment type="subcellular location">
    <subcellularLocation>
        <location evidence="1">Cytoplasm</location>
    </subcellularLocation>
</comment>
<comment type="similarity">
    <text evidence="1">Belongs to the thioester dehydratase family. FabZ subfamily.</text>
</comment>
<keyword id="KW-0963">Cytoplasm</keyword>
<keyword id="KW-0441">Lipid A biosynthesis</keyword>
<keyword id="KW-0444">Lipid biosynthesis</keyword>
<keyword id="KW-0443">Lipid metabolism</keyword>
<keyword id="KW-0456">Lyase</keyword>
<keyword id="KW-1185">Reference proteome</keyword>
<proteinExistence type="inferred from homology"/>
<evidence type="ECO:0000255" key="1">
    <source>
        <dbReference type="HAMAP-Rule" id="MF_00406"/>
    </source>
</evidence>
<dbReference type="EC" id="4.2.1.59" evidence="1"/>
<dbReference type="EMBL" id="CP000961">
    <property type="protein sequence ID" value="ACA87540.1"/>
    <property type="molecule type" value="Genomic_DNA"/>
</dbReference>
<dbReference type="RefSeq" id="WP_012325876.1">
    <property type="nucleotide sequence ID" value="NC_010506.1"/>
</dbReference>
<dbReference type="SMR" id="B1KNT2"/>
<dbReference type="STRING" id="392500.Swoo_3270"/>
<dbReference type="KEGG" id="swd:Swoo_3270"/>
<dbReference type="eggNOG" id="COG0764">
    <property type="taxonomic scope" value="Bacteria"/>
</dbReference>
<dbReference type="HOGENOM" id="CLU_078912_1_0_6"/>
<dbReference type="Proteomes" id="UP000002168">
    <property type="component" value="Chromosome"/>
</dbReference>
<dbReference type="GO" id="GO:0005737">
    <property type="term" value="C:cytoplasm"/>
    <property type="evidence" value="ECO:0007669"/>
    <property type="project" value="UniProtKB-SubCell"/>
</dbReference>
<dbReference type="GO" id="GO:0016020">
    <property type="term" value="C:membrane"/>
    <property type="evidence" value="ECO:0007669"/>
    <property type="project" value="GOC"/>
</dbReference>
<dbReference type="GO" id="GO:0019171">
    <property type="term" value="F:(3R)-hydroxyacyl-[acyl-carrier-protein] dehydratase activity"/>
    <property type="evidence" value="ECO:0007669"/>
    <property type="project" value="UniProtKB-EC"/>
</dbReference>
<dbReference type="GO" id="GO:0006633">
    <property type="term" value="P:fatty acid biosynthetic process"/>
    <property type="evidence" value="ECO:0007669"/>
    <property type="project" value="UniProtKB-UniRule"/>
</dbReference>
<dbReference type="GO" id="GO:0009245">
    <property type="term" value="P:lipid A biosynthetic process"/>
    <property type="evidence" value="ECO:0007669"/>
    <property type="project" value="UniProtKB-UniRule"/>
</dbReference>
<dbReference type="CDD" id="cd01288">
    <property type="entry name" value="FabZ"/>
    <property type="match status" value="1"/>
</dbReference>
<dbReference type="FunFam" id="3.10.129.10:FF:000001">
    <property type="entry name" value="3-hydroxyacyl-[acyl-carrier-protein] dehydratase FabZ"/>
    <property type="match status" value="1"/>
</dbReference>
<dbReference type="Gene3D" id="3.10.129.10">
    <property type="entry name" value="Hotdog Thioesterase"/>
    <property type="match status" value="1"/>
</dbReference>
<dbReference type="HAMAP" id="MF_00406">
    <property type="entry name" value="FabZ"/>
    <property type="match status" value="1"/>
</dbReference>
<dbReference type="InterPro" id="IPR013114">
    <property type="entry name" value="FabA_FabZ"/>
</dbReference>
<dbReference type="InterPro" id="IPR010084">
    <property type="entry name" value="FabZ"/>
</dbReference>
<dbReference type="InterPro" id="IPR029069">
    <property type="entry name" value="HotDog_dom_sf"/>
</dbReference>
<dbReference type="NCBIfam" id="TIGR01750">
    <property type="entry name" value="fabZ"/>
    <property type="match status" value="1"/>
</dbReference>
<dbReference type="NCBIfam" id="NF000582">
    <property type="entry name" value="PRK00006.1"/>
    <property type="match status" value="1"/>
</dbReference>
<dbReference type="PANTHER" id="PTHR30272">
    <property type="entry name" value="3-HYDROXYACYL-[ACYL-CARRIER-PROTEIN] DEHYDRATASE"/>
    <property type="match status" value="1"/>
</dbReference>
<dbReference type="PANTHER" id="PTHR30272:SF1">
    <property type="entry name" value="3-HYDROXYACYL-[ACYL-CARRIER-PROTEIN] DEHYDRATASE"/>
    <property type="match status" value="1"/>
</dbReference>
<dbReference type="Pfam" id="PF07977">
    <property type="entry name" value="FabA"/>
    <property type="match status" value="1"/>
</dbReference>
<dbReference type="SUPFAM" id="SSF54637">
    <property type="entry name" value="Thioesterase/thiol ester dehydrase-isomerase"/>
    <property type="match status" value="1"/>
</dbReference>
<accession>B1KNT2</accession>
<protein>
    <recommendedName>
        <fullName evidence="1">3-hydroxyacyl-[acyl-carrier-protein] dehydratase FabZ</fullName>
        <ecNumber evidence="1">4.2.1.59</ecNumber>
    </recommendedName>
    <alternativeName>
        <fullName evidence="1">(3R)-hydroxymyristoyl-[acyl-carrier-protein] dehydratase</fullName>
        <shortName evidence="1">(3R)-hydroxymyristoyl-ACP dehydrase</shortName>
    </alternativeName>
    <alternativeName>
        <fullName evidence="1">Beta-hydroxyacyl-ACP dehydratase</fullName>
    </alternativeName>
</protein>
<feature type="chain" id="PRO_1000123666" description="3-hydroxyacyl-[acyl-carrier-protein] dehydratase FabZ">
    <location>
        <begin position="1"/>
        <end position="152"/>
    </location>
</feature>
<feature type="active site" evidence="1">
    <location>
        <position position="54"/>
    </location>
</feature>